<feature type="chain" id="PRO_0000380528" description="UDP-4-amino-4-deoxy-L-arabinose--oxoglutarate aminotransferase">
    <location>
        <begin position="1"/>
        <end position="379"/>
    </location>
</feature>
<feature type="modified residue" description="N6-(pyridoxal phosphate)lysine" evidence="1">
    <location>
        <position position="182"/>
    </location>
</feature>
<dbReference type="EC" id="2.6.1.87" evidence="1"/>
<dbReference type="EMBL" id="CU928160">
    <property type="protein sequence ID" value="CAQ99172.1"/>
    <property type="status" value="ALT_INIT"/>
    <property type="molecule type" value="Genomic_DNA"/>
</dbReference>
<dbReference type="RefSeq" id="WP_001342601.1">
    <property type="nucleotide sequence ID" value="NC_011741.1"/>
</dbReference>
<dbReference type="SMR" id="B7M5T5"/>
<dbReference type="KEGG" id="ecr:ECIAI1_2329"/>
<dbReference type="HOGENOM" id="CLU_033332_0_3_6"/>
<dbReference type="UniPathway" id="UPA00030"/>
<dbReference type="UniPathway" id="UPA00032">
    <property type="reaction ID" value="UER00493"/>
</dbReference>
<dbReference type="GO" id="GO:0016020">
    <property type="term" value="C:membrane"/>
    <property type="evidence" value="ECO:0007669"/>
    <property type="project" value="GOC"/>
</dbReference>
<dbReference type="GO" id="GO:0030170">
    <property type="term" value="F:pyridoxal phosphate binding"/>
    <property type="evidence" value="ECO:0007669"/>
    <property type="project" value="TreeGrafter"/>
</dbReference>
<dbReference type="GO" id="GO:0099620">
    <property type="term" value="F:UDP-4-amino-4-deoxy-L-arabinose aminotransferase"/>
    <property type="evidence" value="ECO:0007669"/>
    <property type="project" value="UniProtKB-EC"/>
</dbReference>
<dbReference type="GO" id="GO:0009245">
    <property type="term" value="P:lipid A biosynthetic process"/>
    <property type="evidence" value="ECO:0007669"/>
    <property type="project" value="UniProtKB-KW"/>
</dbReference>
<dbReference type="GO" id="GO:0009103">
    <property type="term" value="P:lipopolysaccharide biosynthetic process"/>
    <property type="evidence" value="ECO:0007669"/>
    <property type="project" value="UniProtKB-UniRule"/>
</dbReference>
<dbReference type="GO" id="GO:0046677">
    <property type="term" value="P:response to antibiotic"/>
    <property type="evidence" value="ECO:0007669"/>
    <property type="project" value="UniProtKB-KW"/>
</dbReference>
<dbReference type="CDD" id="cd00616">
    <property type="entry name" value="AHBA_syn"/>
    <property type="match status" value="1"/>
</dbReference>
<dbReference type="FunFam" id="3.40.640.10:FF:000040">
    <property type="entry name" value="UDP-4-amino-4-deoxy-L-arabinose--oxoglutarate aminotransferase"/>
    <property type="match status" value="1"/>
</dbReference>
<dbReference type="FunFam" id="3.90.1150.10:FF:000030">
    <property type="entry name" value="UDP-4-amino-4-deoxy-L-arabinose--oxoglutarate aminotransferase"/>
    <property type="match status" value="1"/>
</dbReference>
<dbReference type="Gene3D" id="3.90.1150.10">
    <property type="entry name" value="Aspartate Aminotransferase, domain 1"/>
    <property type="match status" value="1"/>
</dbReference>
<dbReference type="Gene3D" id="3.40.640.10">
    <property type="entry name" value="Type I PLP-dependent aspartate aminotransferase-like (Major domain)"/>
    <property type="match status" value="1"/>
</dbReference>
<dbReference type="HAMAP" id="MF_01167">
    <property type="entry name" value="ArnB_transfer"/>
    <property type="match status" value="1"/>
</dbReference>
<dbReference type="InterPro" id="IPR022850">
    <property type="entry name" value="ArnB_NH2Trfase"/>
</dbReference>
<dbReference type="InterPro" id="IPR000653">
    <property type="entry name" value="DegT/StrS_aminotransferase"/>
</dbReference>
<dbReference type="InterPro" id="IPR015424">
    <property type="entry name" value="PyrdxlP-dep_Trfase"/>
</dbReference>
<dbReference type="InterPro" id="IPR015421">
    <property type="entry name" value="PyrdxlP-dep_Trfase_major"/>
</dbReference>
<dbReference type="InterPro" id="IPR015422">
    <property type="entry name" value="PyrdxlP-dep_Trfase_small"/>
</dbReference>
<dbReference type="NCBIfam" id="NF008658">
    <property type="entry name" value="PRK11658.1"/>
    <property type="match status" value="1"/>
</dbReference>
<dbReference type="PANTHER" id="PTHR30244">
    <property type="entry name" value="TRANSAMINASE"/>
    <property type="match status" value="1"/>
</dbReference>
<dbReference type="PANTHER" id="PTHR30244:SF41">
    <property type="entry name" value="UDP-4-AMINO-4-DEOXY-L-ARABINOSE--OXOGLUTARATE AMINOTRANSFERASE"/>
    <property type="match status" value="1"/>
</dbReference>
<dbReference type="Pfam" id="PF01041">
    <property type="entry name" value="DegT_DnrJ_EryC1"/>
    <property type="match status" value="1"/>
</dbReference>
<dbReference type="PIRSF" id="PIRSF000390">
    <property type="entry name" value="PLP_StrS"/>
    <property type="match status" value="1"/>
</dbReference>
<dbReference type="SUPFAM" id="SSF53383">
    <property type="entry name" value="PLP-dependent transferases"/>
    <property type="match status" value="1"/>
</dbReference>
<proteinExistence type="inferred from homology"/>
<evidence type="ECO:0000255" key="1">
    <source>
        <dbReference type="HAMAP-Rule" id="MF_01167"/>
    </source>
</evidence>
<evidence type="ECO:0000305" key="2"/>
<gene>
    <name evidence="1" type="primary">arnB</name>
    <name type="ordered locus">ECIAI1_2329</name>
</gene>
<comment type="function">
    <text evidence="1">Catalyzes the conversion of UDP-4-keto-arabinose (UDP-Ara4O) to UDP-4-amino-4-deoxy-L-arabinose (UDP-L-Ara4N). The modified arabinose is attached to lipid A and is required for resistance to polymyxin and cationic antimicrobial peptides.</text>
</comment>
<comment type="catalytic activity">
    <reaction evidence="1">
        <text>UDP-4-amino-4-deoxy-beta-L-arabinose + 2-oxoglutarate = UDP-beta-L-threo-pentopyranos-4-ulose + L-glutamate</text>
        <dbReference type="Rhea" id="RHEA:24710"/>
        <dbReference type="ChEBI" id="CHEBI:16810"/>
        <dbReference type="ChEBI" id="CHEBI:29985"/>
        <dbReference type="ChEBI" id="CHEBI:58708"/>
        <dbReference type="ChEBI" id="CHEBI:58710"/>
        <dbReference type="EC" id="2.6.1.87"/>
    </reaction>
</comment>
<comment type="cofactor">
    <cofactor evidence="1">
        <name>pyridoxal 5'-phosphate</name>
        <dbReference type="ChEBI" id="CHEBI:597326"/>
    </cofactor>
</comment>
<comment type="pathway">
    <text evidence="1">Nucleotide-sugar biosynthesis; UDP-4-deoxy-4-formamido-beta-L-arabinose biosynthesis; UDP-4-deoxy-4-formamido-beta-L-arabinose from UDP-alpha-D-glucuronate: step 2/3.</text>
</comment>
<comment type="pathway">
    <text evidence="1">Bacterial outer membrane biogenesis; lipopolysaccharide biosynthesis.</text>
</comment>
<comment type="subunit">
    <text evidence="1">Homodimer.</text>
</comment>
<comment type="similarity">
    <text evidence="1">Belongs to the DegT/DnrJ/EryC1 family. ArnB subfamily.</text>
</comment>
<comment type="sequence caution" evidence="2">
    <conflict type="erroneous initiation">
        <sequence resource="EMBL-CDS" id="CAQ99172"/>
    </conflict>
</comment>
<protein>
    <recommendedName>
        <fullName evidence="1">UDP-4-amino-4-deoxy-L-arabinose--oxoglutarate aminotransferase</fullName>
        <ecNumber evidence="1">2.6.1.87</ecNumber>
    </recommendedName>
    <alternativeName>
        <fullName evidence="1">UDP-(beta-L-threo-pentapyranosyl-4''-ulose diphosphate) aminotransferase</fullName>
        <shortName evidence="1">UDP-Ara4O aminotransferase</shortName>
    </alternativeName>
    <alternativeName>
        <fullName evidence="1">UDP-4-amino-4-deoxy-L-arabinose aminotransferase</fullName>
    </alternativeName>
</protein>
<accession>B7M5T5</accession>
<reference key="1">
    <citation type="journal article" date="2009" name="PLoS Genet.">
        <title>Organised genome dynamics in the Escherichia coli species results in highly diverse adaptive paths.</title>
        <authorList>
            <person name="Touchon M."/>
            <person name="Hoede C."/>
            <person name="Tenaillon O."/>
            <person name="Barbe V."/>
            <person name="Baeriswyl S."/>
            <person name="Bidet P."/>
            <person name="Bingen E."/>
            <person name="Bonacorsi S."/>
            <person name="Bouchier C."/>
            <person name="Bouvet O."/>
            <person name="Calteau A."/>
            <person name="Chiapello H."/>
            <person name="Clermont O."/>
            <person name="Cruveiller S."/>
            <person name="Danchin A."/>
            <person name="Diard M."/>
            <person name="Dossat C."/>
            <person name="Karoui M.E."/>
            <person name="Frapy E."/>
            <person name="Garry L."/>
            <person name="Ghigo J.M."/>
            <person name="Gilles A.M."/>
            <person name="Johnson J."/>
            <person name="Le Bouguenec C."/>
            <person name="Lescat M."/>
            <person name="Mangenot S."/>
            <person name="Martinez-Jehanne V."/>
            <person name="Matic I."/>
            <person name="Nassif X."/>
            <person name="Oztas S."/>
            <person name="Petit M.A."/>
            <person name="Pichon C."/>
            <person name="Rouy Z."/>
            <person name="Ruf C.S."/>
            <person name="Schneider D."/>
            <person name="Tourret J."/>
            <person name="Vacherie B."/>
            <person name="Vallenet D."/>
            <person name="Medigue C."/>
            <person name="Rocha E.P.C."/>
            <person name="Denamur E."/>
        </authorList>
    </citation>
    <scope>NUCLEOTIDE SEQUENCE [LARGE SCALE GENOMIC DNA]</scope>
    <source>
        <strain>IAI1</strain>
    </source>
</reference>
<sequence>MSEFLPFSRPAMGVEELAAVKEVLESGWLTTGPKNQALEQAFCQLTGNQHAIAVSSATAGMHITLMALEIGKGDEVITPSLTWVSTLNMISLLGATPVMVDVDRDTLMVTPEAIESAITPRTKAIIPVHYAGAPADIDAIRAIGERYGIAVIEDAAHAVGTYYKGRHIGAKGTAIFSFHAIKNITCAEGGLIVTDNENLARQLRMLKFHGLGVDAYDRQTWGRAPQAEVLTPGYKYNLTDINAAIALTQLAKLEHLNTRRREIAQQYQQALAALPFQPLSLPAWPHVHAWHLFIIRVDEQRCGISRDALMEALKERGIGTGLHFRAAHTQKYYRERFPTLSLPNTEWNSERICSLPLFPDMTTADADRVITALQQLAGQ</sequence>
<name>ARNB_ECO8A</name>
<organism>
    <name type="scientific">Escherichia coli O8 (strain IAI1)</name>
    <dbReference type="NCBI Taxonomy" id="585034"/>
    <lineage>
        <taxon>Bacteria</taxon>
        <taxon>Pseudomonadati</taxon>
        <taxon>Pseudomonadota</taxon>
        <taxon>Gammaproteobacteria</taxon>
        <taxon>Enterobacterales</taxon>
        <taxon>Enterobacteriaceae</taxon>
        <taxon>Escherichia</taxon>
    </lineage>
</organism>
<keyword id="KW-0032">Aminotransferase</keyword>
<keyword id="KW-0046">Antibiotic resistance</keyword>
<keyword id="KW-0441">Lipid A biosynthesis</keyword>
<keyword id="KW-0444">Lipid biosynthesis</keyword>
<keyword id="KW-0443">Lipid metabolism</keyword>
<keyword id="KW-0448">Lipopolysaccharide biosynthesis</keyword>
<keyword id="KW-0663">Pyridoxal phosphate</keyword>
<keyword id="KW-0808">Transferase</keyword>